<evidence type="ECO:0000250" key="1">
    <source>
        <dbReference type="UniProtKB" id="Q13572"/>
    </source>
</evidence>
<evidence type="ECO:0000250" key="2">
    <source>
        <dbReference type="UniProtKB" id="Q84Y01"/>
    </source>
</evidence>
<evidence type="ECO:0000250" key="3">
    <source>
        <dbReference type="UniProtKB" id="Q9XYQ1"/>
    </source>
</evidence>
<evidence type="ECO:0000269" key="4">
    <source>
    </source>
</evidence>
<evidence type="ECO:0000269" key="5">
    <source>
    </source>
</evidence>
<evidence type="ECO:0000269" key="6">
    <source>
    </source>
</evidence>
<evidence type="ECO:0000303" key="7">
    <source>
    </source>
</evidence>
<evidence type="ECO:0000303" key="8">
    <source>
    </source>
</evidence>
<evidence type="ECO:0000303" key="9">
    <source>
    </source>
</evidence>
<evidence type="ECO:0000305" key="10"/>
<evidence type="ECO:0000312" key="11">
    <source>
        <dbReference type="EMBL" id="AAO00682.1"/>
    </source>
</evidence>
<evidence type="ECO:0000312" key="12">
    <source>
        <dbReference type="EMBL" id="AAO06958.1"/>
    </source>
</evidence>
<evidence type="ECO:0000312" key="13">
    <source>
        <dbReference type="EMBL" id="ABF94780.1"/>
    </source>
</evidence>
<evidence type="ECO:0000312" key="14">
    <source>
        <dbReference type="EMBL" id="BAF11371.1"/>
    </source>
</evidence>
<evidence type="ECO:0000312" key="15">
    <source>
        <dbReference type="EMBL" id="EEE58643.1"/>
    </source>
</evidence>
<gene>
    <name type="primary">ITPK2</name>
    <name evidence="9" type="synonym">DSM3</name>
    <name evidence="8" type="synonym">ITL1</name>
    <name evidence="14" type="ordered locus">Os03g0230500</name>
    <name evidence="13" type="ordered locus">LOC_Os03g12840</name>
    <name evidence="11" type="ORF">OJ1017C11.3</name>
    <name evidence="12" type="ORF">OJ1781E12.6</name>
    <name evidence="15" type="ORF">OsJ_10020</name>
</gene>
<comment type="function">
    <text evidence="2 5 6">Kinase that can phosphorylate various inositol polyphosphate such as Ins(3,4,5,6)P4 or Ins(1,3,4)P3 and participates in phytic acid biosynthesis in developing seeds. Phytic acid is the primary storage form of phosphorus in cereal grains and other plant seeds (By similarity). May be involved in the negative regulation of osmotic stress signaling (PubMed:18421420, PubMed:22038091).</text>
</comment>
<comment type="catalytic activity">
    <reaction evidence="10">
        <text>1D-myo-inositol 3,4,5,6-tetrakisphosphate + ATP = 1D-myo-inositol 1,3,4,5,6-pentakisphosphate + ADP + H(+)</text>
        <dbReference type="Rhea" id="RHEA:12452"/>
        <dbReference type="ChEBI" id="CHEBI:15378"/>
        <dbReference type="ChEBI" id="CHEBI:30616"/>
        <dbReference type="ChEBI" id="CHEBI:57539"/>
        <dbReference type="ChEBI" id="CHEBI:57733"/>
        <dbReference type="ChEBI" id="CHEBI:456216"/>
        <dbReference type="EC" id="2.7.1.134"/>
    </reaction>
</comment>
<comment type="catalytic activity">
    <reaction evidence="10">
        <text>1D-myo-inositol 1,3,4-trisphosphate + ATP = 1D-myo-inositol 1,3,4,5-tetrakisphosphate + ADP + H(+)</text>
        <dbReference type="Rhea" id="RHEA:13253"/>
        <dbReference type="ChEBI" id="CHEBI:15378"/>
        <dbReference type="ChEBI" id="CHEBI:30616"/>
        <dbReference type="ChEBI" id="CHEBI:57895"/>
        <dbReference type="ChEBI" id="CHEBI:58414"/>
        <dbReference type="ChEBI" id="CHEBI:456216"/>
        <dbReference type="EC" id="2.7.1.159"/>
    </reaction>
</comment>
<comment type="catalytic activity">
    <reaction evidence="10">
        <text>1D-myo-inositol 1,3,4-trisphosphate + ATP = 1D-myo-inositol 1,3,4,6-tetrakisphosphate + ADP + H(+)</text>
        <dbReference type="Rhea" id="RHEA:20940"/>
        <dbReference type="ChEBI" id="CHEBI:15378"/>
        <dbReference type="ChEBI" id="CHEBI:30616"/>
        <dbReference type="ChEBI" id="CHEBI:57660"/>
        <dbReference type="ChEBI" id="CHEBI:58414"/>
        <dbReference type="ChEBI" id="CHEBI:456216"/>
        <dbReference type="EC" id="2.7.1.159"/>
    </reaction>
</comment>
<comment type="cofactor">
    <cofactor evidence="1">
        <name>Mg(2+)</name>
        <dbReference type="ChEBI" id="CHEBI:18420"/>
    </cofactor>
    <text evidence="1">Binds 2 magnesium ions per subunit.</text>
</comment>
<comment type="subunit">
    <text evidence="1">Monomer.</text>
</comment>
<comment type="subcellular location">
    <subcellularLocation>
        <location evidence="6">Endoplasmic reticulum</location>
    </subcellularLocation>
</comment>
<comment type="tissue specificity">
    <text evidence="4">Expressed in roots, leaves, flowers, anthers and embryos.</text>
</comment>
<comment type="induction">
    <text evidence="5">By drought and salt stresses.</text>
</comment>
<comment type="disruption phenotype">
    <text evidence="6">No visible phenotype under normal growth conditions, but mutant plants show increased sensitivity to salt and drought stresses.</text>
</comment>
<comment type="similarity">
    <text evidence="10">Belongs to the ITPK1 family.</text>
</comment>
<comment type="sequence caution" evidence="10">
    <conflict type="erroneous gene model prediction">
        <sequence resource="EMBL-CDS" id="AAO00682"/>
    </conflict>
</comment>
<comment type="sequence caution" evidence="10">
    <conflict type="erroneous gene model prediction">
        <sequence resource="EMBL-CDS" id="AAO06958"/>
    </conflict>
</comment>
<sequence length="349" mass="38800">MRLHGEVSFDEDEEEVVMVPAAALSSSPLNGGAVPVTRLVVGYALTKKKVKSFLQPNLLLLARKKGINLVAIDDTRPLAEQGPFDVILHKITSKEWQQVLEDYHEEHPEVTVLDPPNAINHLNNRQSMLAEVSDLNLSSFYGEVCTPRQLVIMRDPSSIPTAVAMAGLTLPLVAKPLVVDGTSKSHELSLAYDEASLSMLDPPLVLQEFVNHGGILFKVYIIGETIQVVRRFSLPDVNTYDLLNNVGVYRFPRVSCAAASADHADLDPHISELPPRPLLEKLGKELRGRLGLRLFNIDMIRELGTKDRYYIIDINYFPGFGKMPGYEHIFTDFLLNLAQSKYKKCLSGG</sequence>
<dbReference type="EC" id="2.7.1.134" evidence="10"/>
<dbReference type="EC" id="2.7.1.159" evidence="10"/>
<dbReference type="EMBL" id="AY323825">
    <property type="protein sequence ID" value="AAQ02374.1"/>
    <property type="molecule type" value="mRNA"/>
</dbReference>
<dbReference type="EMBL" id="AC105927">
    <property type="protein sequence ID" value="AAO06958.1"/>
    <property type="status" value="ALT_SEQ"/>
    <property type="molecule type" value="Genomic_DNA"/>
</dbReference>
<dbReference type="EMBL" id="AC135157">
    <property type="protein sequence ID" value="AAO00682.1"/>
    <property type="status" value="ALT_SEQ"/>
    <property type="molecule type" value="Genomic_DNA"/>
</dbReference>
<dbReference type="EMBL" id="DP000009">
    <property type="protein sequence ID" value="ABF94780.1"/>
    <property type="molecule type" value="Genomic_DNA"/>
</dbReference>
<dbReference type="EMBL" id="AP008209">
    <property type="protein sequence ID" value="BAF11371.1"/>
    <property type="molecule type" value="Genomic_DNA"/>
</dbReference>
<dbReference type="EMBL" id="AP014959">
    <property type="protein sequence ID" value="BAS83098.1"/>
    <property type="molecule type" value="Genomic_DNA"/>
</dbReference>
<dbReference type="EMBL" id="CM000140">
    <property type="protein sequence ID" value="EEE58643.1"/>
    <property type="molecule type" value="Genomic_DNA"/>
</dbReference>
<dbReference type="EMBL" id="AK100971">
    <property type="protein sequence ID" value="BAG94858.1"/>
    <property type="molecule type" value="mRNA"/>
</dbReference>
<dbReference type="RefSeq" id="XP_015632763.1">
    <property type="nucleotide sequence ID" value="XM_015777277.1"/>
</dbReference>
<dbReference type="SMR" id="Q10PL5"/>
<dbReference type="FunCoup" id="Q10PL5">
    <property type="interactions" value="125"/>
</dbReference>
<dbReference type="STRING" id="39947.Q10PL5"/>
<dbReference type="PaxDb" id="39947-Q10PL5"/>
<dbReference type="EnsemblPlants" id="Os03t0230500-01">
    <property type="protein sequence ID" value="Os03t0230500-01"/>
    <property type="gene ID" value="Os03g0230500"/>
</dbReference>
<dbReference type="Gramene" id="Os03t0230500-01">
    <property type="protein sequence ID" value="Os03t0230500-01"/>
    <property type="gene ID" value="Os03g0230500"/>
</dbReference>
<dbReference type="KEGG" id="dosa:Os03g0230500"/>
<dbReference type="eggNOG" id="ENOG502QQS1">
    <property type="taxonomic scope" value="Eukaryota"/>
</dbReference>
<dbReference type="HOGENOM" id="CLU_041857_0_0_1"/>
<dbReference type="InParanoid" id="Q10PL5"/>
<dbReference type="OMA" id="MKPREED"/>
<dbReference type="OrthoDB" id="25308at2759"/>
<dbReference type="BRENDA" id="2.7.1.159">
    <property type="organism ID" value="4460"/>
</dbReference>
<dbReference type="PlantReactome" id="R-OSA-1119434">
    <property type="pathway name" value="Phytic acid biosynthesis (lipid-independent)"/>
</dbReference>
<dbReference type="Proteomes" id="UP000000763">
    <property type="component" value="Chromosome 3"/>
</dbReference>
<dbReference type="Proteomes" id="UP000007752">
    <property type="component" value="Chromosome 3"/>
</dbReference>
<dbReference type="Proteomes" id="UP000059680">
    <property type="component" value="Chromosome 3"/>
</dbReference>
<dbReference type="GO" id="GO:0005783">
    <property type="term" value="C:endoplasmic reticulum"/>
    <property type="evidence" value="ECO:0007669"/>
    <property type="project" value="UniProtKB-SubCell"/>
</dbReference>
<dbReference type="GO" id="GO:0005524">
    <property type="term" value="F:ATP binding"/>
    <property type="evidence" value="ECO:0007669"/>
    <property type="project" value="UniProtKB-KW"/>
</dbReference>
<dbReference type="GO" id="GO:0052726">
    <property type="term" value="F:inositol-1,3,4-trisphosphate 5-kinase activity"/>
    <property type="evidence" value="ECO:0000318"/>
    <property type="project" value="GO_Central"/>
</dbReference>
<dbReference type="GO" id="GO:0052725">
    <property type="term" value="F:inositol-1,3,4-trisphosphate 6-kinase activity"/>
    <property type="evidence" value="ECO:0000318"/>
    <property type="project" value="GO_Central"/>
</dbReference>
<dbReference type="GO" id="GO:0047325">
    <property type="term" value="F:inositol-3,4,5,6-tetrakisphosphate 1-kinase activity"/>
    <property type="evidence" value="ECO:0000318"/>
    <property type="project" value="GO_Central"/>
</dbReference>
<dbReference type="GO" id="GO:0000287">
    <property type="term" value="F:magnesium ion binding"/>
    <property type="evidence" value="ECO:0007669"/>
    <property type="project" value="InterPro"/>
</dbReference>
<dbReference type="GO" id="GO:0032957">
    <property type="term" value="P:inositol trisphosphate metabolic process"/>
    <property type="evidence" value="ECO:0007669"/>
    <property type="project" value="InterPro"/>
</dbReference>
<dbReference type="GO" id="GO:0047484">
    <property type="term" value="P:regulation of response to osmotic stress"/>
    <property type="evidence" value="ECO:0000315"/>
    <property type="project" value="UniProtKB"/>
</dbReference>
<dbReference type="FunFam" id="3.30.1490.220:FF:000002">
    <property type="entry name" value="Inositol-tetrakisphosphate 1-kinase"/>
    <property type="match status" value="1"/>
</dbReference>
<dbReference type="FunFam" id="3.40.50.11370:FF:000002">
    <property type="entry name" value="Inositol-tetrakisphosphate 1-kinase"/>
    <property type="match status" value="1"/>
</dbReference>
<dbReference type="Gene3D" id="3.30.1490.220">
    <property type="match status" value="1"/>
</dbReference>
<dbReference type="Gene3D" id="3.40.50.11370">
    <property type="match status" value="1"/>
</dbReference>
<dbReference type="InterPro" id="IPR008656">
    <property type="entry name" value="Inositol_tetrakis-P_1-kinase"/>
</dbReference>
<dbReference type="InterPro" id="IPR040464">
    <property type="entry name" value="InsP(3)kin_ATP-grasp"/>
</dbReference>
<dbReference type="InterPro" id="IPR041429">
    <property type="entry name" value="ITPK1_N"/>
</dbReference>
<dbReference type="PANTHER" id="PTHR14217">
    <property type="entry name" value="INOSITOL-TETRAKISPHOSPHATE 1-KINASE"/>
    <property type="match status" value="1"/>
</dbReference>
<dbReference type="PANTHER" id="PTHR14217:SF7">
    <property type="entry name" value="INOSITOL-TETRAKISPHOSPHATE 1-KINASE 2"/>
    <property type="match status" value="1"/>
</dbReference>
<dbReference type="Pfam" id="PF05770">
    <property type="entry name" value="Ins134_P3_kin"/>
    <property type="match status" value="1"/>
</dbReference>
<dbReference type="Pfam" id="PF17927">
    <property type="entry name" value="Ins134_P3_kin_N"/>
    <property type="match status" value="1"/>
</dbReference>
<dbReference type="PIRSF" id="PIRSF038186">
    <property type="entry name" value="ITPK"/>
    <property type="match status" value="1"/>
</dbReference>
<dbReference type="SUPFAM" id="SSF56059">
    <property type="entry name" value="Glutathione synthetase ATP-binding domain-like"/>
    <property type="match status" value="1"/>
</dbReference>
<proteinExistence type="evidence at transcript level"/>
<protein>
    <recommendedName>
        <fullName evidence="10">Inositol-tetrakisphosphate 1-kinase 2</fullName>
        <ecNumber evidence="10">2.7.1.134</ecNumber>
    </recommendedName>
    <alternativeName>
        <fullName evidence="10">Inositol 1,3,4-trisphosphate 5/6-kinase 2</fullName>
        <shortName evidence="10">Inositol-triphosphate 5/6-kinase 2</shortName>
        <shortName evidence="10">Ins(1,3,4)P(3) 5/6-kinase 2</shortName>
        <shortName evidence="7">OsITP5/6K-2</shortName>
        <shortName evidence="9">OsITPK2</shortName>
        <ecNumber evidence="10">2.7.1.159</ecNumber>
    </alternativeName>
    <alternativeName>
        <fullName evidence="8">OsITL1</fullName>
    </alternativeName>
    <alternativeName>
        <fullName evidence="9">Protein DROUGHT- AND SALT-SENSITIVE MUTANT 3</fullName>
        <shortName evidence="9">OsDSM3</shortName>
    </alternativeName>
</protein>
<accession>Q10PL5</accession>
<accession>A0A0P0VUY1</accession>
<accession>A1KXK8</accession>
<accession>B9F6M0</accession>
<accession>Q8GSI5</accession>
<keyword id="KW-0067">ATP-binding</keyword>
<keyword id="KW-0256">Endoplasmic reticulum</keyword>
<keyword id="KW-0418">Kinase</keyword>
<keyword id="KW-0460">Magnesium</keyword>
<keyword id="KW-0479">Metal-binding</keyword>
<keyword id="KW-0547">Nucleotide-binding</keyword>
<keyword id="KW-1185">Reference proteome</keyword>
<keyword id="KW-0808">Transferase</keyword>
<organism>
    <name type="scientific">Oryza sativa subsp. japonica</name>
    <name type="common">Rice</name>
    <dbReference type="NCBI Taxonomy" id="39947"/>
    <lineage>
        <taxon>Eukaryota</taxon>
        <taxon>Viridiplantae</taxon>
        <taxon>Streptophyta</taxon>
        <taxon>Embryophyta</taxon>
        <taxon>Tracheophyta</taxon>
        <taxon>Spermatophyta</taxon>
        <taxon>Magnoliopsida</taxon>
        <taxon>Liliopsida</taxon>
        <taxon>Poales</taxon>
        <taxon>Poaceae</taxon>
        <taxon>BOP clade</taxon>
        <taxon>Oryzoideae</taxon>
        <taxon>Oryzeae</taxon>
        <taxon>Oryzinae</taxon>
        <taxon>Oryza</taxon>
        <taxon>Oryza sativa</taxon>
    </lineage>
</organism>
<name>ITPK2_ORYSJ</name>
<feature type="chain" id="PRO_0000431871" description="Inositol-tetrakisphosphate 1-kinase 2">
    <location>
        <begin position="1"/>
        <end position="349"/>
    </location>
</feature>
<feature type="binding site" evidence="3">
    <location>
        <position position="48"/>
    </location>
    <ligand>
        <name>1D-myo-inositol 1,3,4-trisphosphate</name>
        <dbReference type="ChEBI" id="CHEBI:58414"/>
    </ligand>
</feature>
<feature type="binding site" evidence="3">
    <location>
        <position position="90"/>
    </location>
    <ligand>
        <name>1D-myo-inositol 1,3,4-trisphosphate</name>
        <dbReference type="ChEBI" id="CHEBI:58414"/>
    </ligand>
</feature>
<feature type="binding site" evidence="1">
    <location>
        <position position="125"/>
    </location>
    <ligand>
        <name>ATP</name>
        <dbReference type="ChEBI" id="CHEBI:30616"/>
    </ligand>
</feature>
<feature type="binding site" evidence="1">
    <location>
        <position position="175"/>
    </location>
    <ligand>
        <name>ATP</name>
        <dbReference type="ChEBI" id="CHEBI:30616"/>
    </ligand>
</feature>
<feature type="binding site" evidence="3">
    <location>
        <position position="186"/>
    </location>
    <ligand>
        <name>1D-myo-inositol 1,3,4-trisphosphate</name>
        <dbReference type="ChEBI" id="CHEBI:58414"/>
    </ligand>
</feature>
<feature type="binding site" evidence="1">
    <location>
        <begin position="207"/>
        <end position="218"/>
    </location>
    <ligand>
        <name>ATP</name>
        <dbReference type="ChEBI" id="CHEBI:30616"/>
    </ligand>
</feature>
<feature type="binding site" evidence="3">
    <location>
        <position position="218"/>
    </location>
    <ligand>
        <name>1D-myo-inositol 1,3,4-trisphosphate</name>
        <dbReference type="ChEBI" id="CHEBI:58414"/>
    </ligand>
</feature>
<feature type="binding site" evidence="1">
    <location>
        <position position="233"/>
    </location>
    <ligand>
        <name>ATP</name>
        <dbReference type="ChEBI" id="CHEBI:30616"/>
    </ligand>
</feature>
<feature type="binding site" evidence="1">
    <location>
        <position position="298"/>
    </location>
    <ligand>
        <name>Mg(2+)</name>
        <dbReference type="ChEBI" id="CHEBI:18420"/>
        <label>1</label>
    </ligand>
</feature>
<feature type="binding site" evidence="1">
    <location>
        <position position="313"/>
    </location>
    <ligand>
        <name>Mg(2+)</name>
        <dbReference type="ChEBI" id="CHEBI:18420"/>
        <label>1</label>
    </ligand>
</feature>
<feature type="binding site" evidence="1">
    <location>
        <position position="313"/>
    </location>
    <ligand>
        <name>Mg(2+)</name>
        <dbReference type="ChEBI" id="CHEBI:18420"/>
        <label>2</label>
    </ligand>
</feature>
<feature type="binding site" evidence="3">
    <location>
        <position position="315"/>
    </location>
    <ligand>
        <name>1D-myo-inositol 1,3,4-trisphosphate</name>
        <dbReference type="ChEBI" id="CHEBI:58414"/>
    </ligand>
</feature>
<feature type="binding site" evidence="1">
    <location>
        <position position="315"/>
    </location>
    <ligand>
        <name>Mg(2+)</name>
        <dbReference type="ChEBI" id="CHEBI:18420"/>
        <label>2</label>
    </ligand>
</feature>
<feature type="sequence conflict" description="In Ref. 6; EEE58643." evidence="10" ref="6">
    <original>P</original>
    <variation>Q</variation>
    <location>
        <position position="20"/>
    </location>
</feature>
<reference key="1">
    <citation type="journal article" date="2008" name="Biotechnol. Lett.">
        <title>OsITL1 gene encoding an inositol 1,3,4-trisphosphate 5/6-kinase is a negative regulator of osmotic stress signaling.</title>
        <authorList>
            <person name="Niu X."/>
            <person name="Chen Q."/>
            <person name="Wang X."/>
        </authorList>
    </citation>
    <scope>NUCLEOTIDE SEQUENCE [MRNA]</scope>
    <scope>FUNCTION</scope>
    <scope>INDUCTION</scope>
    <source>
        <strain>cv. Zhongzuo-93</strain>
    </source>
</reference>
<reference key="2">
    <citation type="journal article" date="2005" name="Genome Res.">
        <title>Sequence, annotation, and analysis of synteny between rice chromosome 3 and diverged grass species.</title>
        <authorList>
            <consortium name="The rice chromosome 3 sequencing consortium"/>
            <person name="Buell C.R."/>
            <person name="Yuan Q."/>
            <person name="Ouyang S."/>
            <person name="Liu J."/>
            <person name="Zhu W."/>
            <person name="Wang A."/>
            <person name="Maiti R."/>
            <person name="Haas B."/>
            <person name="Wortman J."/>
            <person name="Pertea M."/>
            <person name="Jones K.M."/>
            <person name="Kim M."/>
            <person name="Overton L."/>
            <person name="Tsitrin T."/>
            <person name="Fadrosh D."/>
            <person name="Bera J."/>
            <person name="Weaver B."/>
            <person name="Jin S."/>
            <person name="Johri S."/>
            <person name="Reardon M."/>
            <person name="Webb K."/>
            <person name="Hill J."/>
            <person name="Moffat K."/>
            <person name="Tallon L."/>
            <person name="Van Aken S."/>
            <person name="Lewis M."/>
            <person name="Utterback T."/>
            <person name="Feldblyum T."/>
            <person name="Zismann V."/>
            <person name="Iobst S."/>
            <person name="Hsiao J."/>
            <person name="de Vazeille A.R."/>
            <person name="Salzberg S.L."/>
            <person name="White O."/>
            <person name="Fraser C.M."/>
            <person name="Yu Y."/>
            <person name="Kim H."/>
            <person name="Rambo T."/>
            <person name="Currie J."/>
            <person name="Collura K."/>
            <person name="Kernodle-Thompson S."/>
            <person name="Wei F."/>
            <person name="Kudrna K."/>
            <person name="Ammiraju J.S.S."/>
            <person name="Luo M."/>
            <person name="Goicoechea J.L."/>
            <person name="Wing R.A."/>
            <person name="Henry D."/>
            <person name="Oates R."/>
            <person name="Palmer M."/>
            <person name="Pries G."/>
            <person name="Saski C."/>
            <person name="Simmons J."/>
            <person name="Soderlund C."/>
            <person name="Nelson W."/>
            <person name="de la Bastide M."/>
            <person name="Spiegel L."/>
            <person name="Nascimento L."/>
            <person name="Huang E."/>
            <person name="Preston R."/>
            <person name="Zutavern T."/>
            <person name="Palmer L."/>
            <person name="O'Shaughnessy A."/>
            <person name="Dike S."/>
            <person name="McCombie W.R."/>
            <person name="Minx P."/>
            <person name="Cordum H."/>
            <person name="Wilson R."/>
            <person name="Jin W."/>
            <person name="Lee H.R."/>
            <person name="Jiang J."/>
            <person name="Jackson S."/>
        </authorList>
    </citation>
    <scope>NUCLEOTIDE SEQUENCE [LARGE SCALE GENOMIC DNA]</scope>
    <source>
        <strain>cv. Nipponbare</strain>
    </source>
</reference>
<reference key="3">
    <citation type="journal article" date="2005" name="Nature">
        <title>The map-based sequence of the rice genome.</title>
        <authorList>
            <consortium name="International rice genome sequencing project (IRGSP)"/>
        </authorList>
    </citation>
    <scope>NUCLEOTIDE SEQUENCE [LARGE SCALE GENOMIC DNA]</scope>
    <source>
        <strain>cv. Nipponbare</strain>
    </source>
</reference>
<reference key="4">
    <citation type="journal article" date="2008" name="Nucleic Acids Res.">
        <title>The rice annotation project database (RAP-DB): 2008 update.</title>
        <authorList>
            <consortium name="The rice annotation project (RAP)"/>
        </authorList>
    </citation>
    <scope>GENOME REANNOTATION</scope>
    <source>
        <strain>cv. Nipponbare</strain>
    </source>
</reference>
<reference key="5">
    <citation type="journal article" date="2013" name="Rice">
        <title>Improvement of the Oryza sativa Nipponbare reference genome using next generation sequence and optical map data.</title>
        <authorList>
            <person name="Kawahara Y."/>
            <person name="de la Bastide M."/>
            <person name="Hamilton J.P."/>
            <person name="Kanamori H."/>
            <person name="McCombie W.R."/>
            <person name="Ouyang S."/>
            <person name="Schwartz D.C."/>
            <person name="Tanaka T."/>
            <person name="Wu J."/>
            <person name="Zhou S."/>
            <person name="Childs K.L."/>
            <person name="Davidson R.M."/>
            <person name="Lin H."/>
            <person name="Quesada-Ocampo L."/>
            <person name="Vaillancourt B."/>
            <person name="Sakai H."/>
            <person name="Lee S.S."/>
            <person name="Kim J."/>
            <person name="Numa H."/>
            <person name="Itoh T."/>
            <person name="Buell C.R."/>
            <person name="Matsumoto T."/>
        </authorList>
    </citation>
    <scope>GENOME REANNOTATION</scope>
    <source>
        <strain>cv. Nipponbare</strain>
    </source>
</reference>
<reference key="6">
    <citation type="journal article" date="2005" name="PLoS Biol.">
        <title>The genomes of Oryza sativa: a history of duplications.</title>
        <authorList>
            <person name="Yu J."/>
            <person name="Wang J."/>
            <person name="Lin W."/>
            <person name="Li S."/>
            <person name="Li H."/>
            <person name="Zhou J."/>
            <person name="Ni P."/>
            <person name="Dong W."/>
            <person name="Hu S."/>
            <person name="Zeng C."/>
            <person name="Zhang J."/>
            <person name="Zhang Y."/>
            <person name="Li R."/>
            <person name="Xu Z."/>
            <person name="Li S."/>
            <person name="Li X."/>
            <person name="Zheng H."/>
            <person name="Cong L."/>
            <person name="Lin L."/>
            <person name="Yin J."/>
            <person name="Geng J."/>
            <person name="Li G."/>
            <person name="Shi J."/>
            <person name="Liu J."/>
            <person name="Lv H."/>
            <person name="Li J."/>
            <person name="Wang J."/>
            <person name="Deng Y."/>
            <person name="Ran L."/>
            <person name="Shi X."/>
            <person name="Wang X."/>
            <person name="Wu Q."/>
            <person name="Li C."/>
            <person name="Ren X."/>
            <person name="Wang J."/>
            <person name="Wang X."/>
            <person name="Li D."/>
            <person name="Liu D."/>
            <person name="Zhang X."/>
            <person name="Ji Z."/>
            <person name="Zhao W."/>
            <person name="Sun Y."/>
            <person name="Zhang Z."/>
            <person name="Bao J."/>
            <person name="Han Y."/>
            <person name="Dong L."/>
            <person name="Ji J."/>
            <person name="Chen P."/>
            <person name="Wu S."/>
            <person name="Liu J."/>
            <person name="Xiao Y."/>
            <person name="Bu D."/>
            <person name="Tan J."/>
            <person name="Yang L."/>
            <person name="Ye C."/>
            <person name="Zhang J."/>
            <person name="Xu J."/>
            <person name="Zhou Y."/>
            <person name="Yu Y."/>
            <person name="Zhang B."/>
            <person name="Zhuang S."/>
            <person name="Wei H."/>
            <person name="Liu B."/>
            <person name="Lei M."/>
            <person name="Yu H."/>
            <person name="Li Y."/>
            <person name="Xu H."/>
            <person name="Wei S."/>
            <person name="He X."/>
            <person name="Fang L."/>
            <person name="Zhang Z."/>
            <person name="Zhang Y."/>
            <person name="Huang X."/>
            <person name="Su Z."/>
            <person name="Tong W."/>
            <person name="Li J."/>
            <person name="Tong Z."/>
            <person name="Li S."/>
            <person name="Ye J."/>
            <person name="Wang L."/>
            <person name="Fang L."/>
            <person name="Lei T."/>
            <person name="Chen C.-S."/>
            <person name="Chen H.-C."/>
            <person name="Xu Z."/>
            <person name="Li H."/>
            <person name="Huang H."/>
            <person name="Zhang F."/>
            <person name="Xu H."/>
            <person name="Li N."/>
            <person name="Zhao C."/>
            <person name="Li S."/>
            <person name="Dong L."/>
            <person name="Huang Y."/>
            <person name="Li L."/>
            <person name="Xi Y."/>
            <person name="Qi Q."/>
            <person name="Li W."/>
            <person name="Zhang B."/>
            <person name="Hu W."/>
            <person name="Zhang Y."/>
            <person name="Tian X."/>
            <person name="Jiao Y."/>
            <person name="Liang X."/>
            <person name="Jin J."/>
            <person name="Gao L."/>
            <person name="Zheng W."/>
            <person name="Hao B."/>
            <person name="Liu S.-M."/>
            <person name="Wang W."/>
            <person name="Yuan L."/>
            <person name="Cao M."/>
            <person name="McDermott J."/>
            <person name="Samudrala R."/>
            <person name="Wang J."/>
            <person name="Wong G.K.-S."/>
            <person name="Yang H."/>
        </authorList>
    </citation>
    <scope>NUCLEOTIDE SEQUENCE [LARGE SCALE GENOMIC DNA]</scope>
    <source>
        <strain>cv. Nipponbare</strain>
    </source>
</reference>
<reference key="7">
    <citation type="journal article" date="2003" name="Science">
        <title>Collection, mapping, and annotation of over 28,000 cDNA clones from japonica rice.</title>
        <authorList>
            <consortium name="The rice full-length cDNA consortium"/>
        </authorList>
    </citation>
    <scope>NUCLEOTIDE SEQUENCE [LARGE SCALE MRNA]</scope>
    <source>
        <strain>cv. Nipponbare</strain>
    </source>
</reference>
<reference key="8">
    <citation type="journal article" date="2007" name="Gene">
        <title>Expression pattern of inositol phosphate-related enzymes in rice (Oryza sativa L.): implications for the phytic acid biosynthetic pathway.</title>
        <authorList>
            <person name="Suzuki M."/>
            <person name="Tanaka K."/>
            <person name="Kuwano M."/>
            <person name="Yoshida K.T."/>
        </authorList>
    </citation>
    <scope>TISSUE SPECIFICITY</scope>
    <scope>GENE FAMILY</scope>
    <scope>NOMENCLATURE</scope>
</reference>
<reference key="9">
    <citation type="journal article" date="2011" name="Plant Mol. Biol.">
        <title>Characterization of an inositol 1,3,4-trisphosphate 5/6-kinase gene that is essential for drought and salt stress responses in rice.</title>
        <authorList>
            <person name="Du H."/>
            <person name="Liu L."/>
            <person name="You L."/>
            <person name="Yang M."/>
            <person name="He Y."/>
            <person name="Li X."/>
            <person name="Xiong L."/>
        </authorList>
    </citation>
    <scope>FUNCTION</scope>
    <scope>SUBCELLULAR LOCATION</scope>
    <scope>DISRUPTION PHENOTYPE</scope>
    <scope>GENE FAMILY</scope>
    <scope>NOMENCLATURE</scope>
</reference>